<accession>Q5UR03</accession>
<reference key="1">
    <citation type="journal article" date="2004" name="Science">
        <title>The 1.2-megabase genome sequence of Mimivirus.</title>
        <authorList>
            <person name="Raoult D."/>
            <person name="Audic S."/>
            <person name="Robert C."/>
            <person name="Abergel C."/>
            <person name="Renesto P."/>
            <person name="Ogata H."/>
            <person name="La Scola B."/>
            <person name="Susan M."/>
            <person name="Claverie J.-M."/>
        </authorList>
    </citation>
    <scope>NUCLEOTIDE SEQUENCE [LARGE SCALE GENOMIC DNA]</scope>
    <source>
        <strain>Rowbotham-Bradford</strain>
    </source>
</reference>
<protein>
    <recommendedName>
        <fullName>Uncharacterized protein L905</fullName>
    </recommendedName>
</protein>
<name>YL905_MIMIV</name>
<organismHost>
    <name type="scientific">Acanthamoeba polyphaga</name>
    <name type="common">Amoeba</name>
    <dbReference type="NCBI Taxonomy" id="5757"/>
</organismHost>
<dbReference type="EMBL" id="AY653733">
    <property type="protein sequence ID" value="AAV51162.1"/>
    <property type="molecule type" value="Genomic_DNA"/>
</dbReference>
<dbReference type="SMR" id="Q5UR03"/>
<dbReference type="KEGG" id="vg:9925574"/>
<dbReference type="OrthoDB" id="30838at10239"/>
<dbReference type="Proteomes" id="UP000001134">
    <property type="component" value="Genome"/>
</dbReference>
<dbReference type="GO" id="GO:0032451">
    <property type="term" value="F:demethylase activity"/>
    <property type="evidence" value="ECO:0007669"/>
    <property type="project" value="TreeGrafter"/>
</dbReference>
<dbReference type="GO" id="GO:0016491">
    <property type="term" value="F:oxidoreductase activity"/>
    <property type="evidence" value="ECO:0007669"/>
    <property type="project" value="TreeGrafter"/>
</dbReference>
<dbReference type="GO" id="GO:0070988">
    <property type="term" value="P:demethylation"/>
    <property type="evidence" value="ECO:0007669"/>
    <property type="project" value="InterPro"/>
</dbReference>
<dbReference type="Gene3D" id="2.60.120.590">
    <property type="entry name" value="Alpha-ketoglutarate-dependent dioxygenase AlkB-like"/>
    <property type="match status" value="1"/>
</dbReference>
<dbReference type="InterPro" id="IPR027450">
    <property type="entry name" value="AlkB-like"/>
</dbReference>
<dbReference type="InterPro" id="IPR037151">
    <property type="entry name" value="AlkB-like_sf"/>
</dbReference>
<dbReference type="InterPro" id="IPR032857">
    <property type="entry name" value="ALKBH4"/>
</dbReference>
<dbReference type="InterPro" id="IPR005123">
    <property type="entry name" value="Oxoglu/Fe-dep_dioxygenase_dom"/>
</dbReference>
<dbReference type="PANTHER" id="PTHR12463:SF1">
    <property type="entry name" value="2-OXOGLUTARATE AND FE-DEPENDENT OXYGENASE FAMILY PROTEIN"/>
    <property type="match status" value="1"/>
</dbReference>
<dbReference type="PANTHER" id="PTHR12463">
    <property type="entry name" value="OXYGENASE-RELATED"/>
    <property type="match status" value="1"/>
</dbReference>
<dbReference type="Pfam" id="PF13532">
    <property type="entry name" value="2OG-FeII_Oxy_2"/>
    <property type="match status" value="1"/>
</dbReference>
<dbReference type="SUPFAM" id="SSF51197">
    <property type="entry name" value="Clavaminate synthase-like"/>
    <property type="match status" value="1"/>
</dbReference>
<dbReference type="PROSITE" id="PS51471">
    <property type="entry name" value="FE2OG_OXY"/>
    <property type="match status" value="1"/>
</dbReference>
<sequence length="210" mass="25243">MSKKFKMKRAKNLNGFSIIHDYVTPDQEKKLLKKINESEWVVDYQRRLQYYNYRNELFEPYDLIPIPNKIPKYLDQLINQMILDKIIDQKPDQIIVNEYKPGEGLKPHFDRKDYYQNVIIGLSLGSGTIMEFYKNKPIPEKKKIYIPPRSLYIIKDDARYIWKHGIPPRKYDEINGKKIPRETRISITFRNVIKEKVKHDNIVYPKRSPN</sequence>
<organism>
    <name type="scientific">Acanthamoeba polyphaga mimivirus</name>
    <name type="common">APMV</name>
    <dbReference type="NCBI Taxonomy" id="212035"/>
    <lineage>
        <taxon>Viruses</taxon>
        <taxon>Varidnaviria</taxon>
        <taxon>Bamfordvirae</taxon>
        <taxon>Nucleocytoviricota</taxon>
        <taxon>Megaviricetes</taxon>
        <taxon>Imitervirales</taxon>
        <taxon>Mimiviridae</taxon>
        <taxon>Megamimivirinae</taxon>
        <taxon>Mimivirus</taxon>
        <taxon>Mimivirus bradfordmassiliense</taxon>
    </lineage>
</organism>
<evidence type="ECO:0000255" key="1">
    <source>
        <dbReference type="PROSITE-ProRule" id="PRU00805"/>
    </source>
</evidence>
<feature type="chain" id="PRO_0000251132" description="Uncharacterized protein L905">
    <location>
        <begin position="1"/>
        <end position="210"/>
    </location>
</feature>
<feature type="domain" description="Fe2OG dioxygenase" evidence="1">
    <location>
        <begin position="90"/>
        <end position="193"/>
    </location>
</feature>
<keyword id="KW-1185">Reference proteome</keyword>
<gene>
    <name type="ordered locus">MIMI_L905</name>
</gene>
<proteinExistence type="predicted"/>